<protein>
    <recommendedName>
        <fullName evidence="1">Large-conductance mechanosensitive channel</fullName>
    </recommendedName>
</protein>
<sequence>MLKEFKEFALKGNVLDLAIAVVMGAAFNKIVTSLVTYIIMPLIGKIFGSVDFAKDWEFWGIKYGLFIQSIIDFIIVAIALFIFVKIANTLVKKEEPEEEIEENTVLLTEIRDLLRAK</sequence>
<gene>
    <name evidence="1" type="primary">mscL</name>
    <name type="ordered locus">SH1560</name>
</gene>
<comment type="function">
    <text evidence="1">Channel that opens in response to stretch forces in the membrane lipid bilayer. May participate in the regulation of osmotic pressure changes within the cell.</text>
</comment>
<comment type="subunit">
    <text evidence="1">Homopentamer.</text>
</comment>
<comment type="subcellular location">
    <subcellularLocation>
        <location evidence="1">Cell membrane</location>
        <topology evidence="1">Multi-pass membrane protein</topology>
    </subcellularLocation>
</comment>
<comment type="similarity">
    <text evidence="1">Belongs to the MscL family.</text>
</comment>
<proteinExistence type="inferred from homology"/>
<evidence type="ECO:0000255" key="1">
    <source>
        <dbReference type="HAMAP-Rule" id="MF_00115"/>
    </source>
</evidence>
<organism>
    <name type="scientific">Staphylococcus haemolyticus (strain JCSC1435)</name>
    <dbReference type="NCBI Taxonomy" id="279808"/>
    <lineage>
        <taxon>Bacteria</taxon>
        <taxon>Bacillati</taxon>
        <taxon>Bacillota</taxon>
        <taxon>Bacilli</taxon>
        <taxon>Bacillales</taxon>
        <taxon>Staphylococcaceae</taxon>
        <taxon>Staphylococcus</taxon>
    </lineage>
</organism>
<keyword id="KW-1003">Cell membrane</keyword>
<keyword id="KW-0407">Ion channel</keyword>
<keyword id="KW-0406">Ion transport</keyword>
<keyword id="KW-0472">Membrane</keyword>
<keyword id="KW-0812">Transmembrane</keyword>
<keyword id="KW-1133">Transmembrane helix</keyword>
<keyword id="KW-0813">Transport</keyword>
<dbReference type="EMBL" id="AP006716">
    <property type="protein sequence ID" value="BAE04869.1"/>
    <property type="molecule type" value="Genomic_DNA"/>
</dbReference>
<dbReference type="RefSeq" id="WP_011275851.1">
    <property type="nucleotide sequence ID" value="NC_007168.1"/>
</dbReference>
<dbReference type="SMR" id="Q4L656"/>
<dbReference type="GeneID" id="93780947"/>
<dbReference type="KEGG" id="sha:SH1560"/>
<dbReference type="eggNOG" id="COG1970">
    <property type="taxonomic scope" value="Bacteria"/>
</dbReference>
<dbReference type="HOGENOM" id="CLU_095787_0_0_9"/>
<dbReference type="OrthoDB" id="9810350at2"/>
<dbReference type="Proteomes" id="UP000000543">
    <property type="component" value="Chromosome"/>
</dbReference>
<dbReference type="GO" id="GO:0005886">
    <property type="term" value="C:plasma membrane"/>
    <property type="evidence" value="ECO:0007669"/>
    <property type="project" value="UniProtKB-SubCell"/>
</dbReference>
<dbReference type="GO" id="GO:0008381">
    <property type="term" value="F:mechanosensitive monoatomic ion channel activity"/>
    <property type="evidence" value="ECO:0007669"/>
    <property type="project" value="UniProtKB-UniRule"/>
</dbReference>
<dbReference type="Gene3D" id="1.10.1200.120">
    <property type="entry name" value="Large-conductance mechanosensitive channel, MscL, domain 1"/>
    <property type="match status" value="1"/>
</dbReference>
<dbReference type="HAMAP" id="MF_00115">
    <property type="entry name" value="MscL"/>
    <property type="match status" value="1"/>
</dbReference>
<dbReference type="InterPro" id="IPR019823">
    <property type="entry name" value="Mechanosensitive_channel_CS"/>
</dbReference>
<dbReference type="InterPro" id="IPR001185">
    <property type="entry name" value="MS_channel"/>
</dbReference>
<dbReference type="InterPro" id="IPR037673">
    <property type="entry name" value="MSC/AndL"/>
</dbReference>
<dbReference type="InterPro" id="IPR036019">
    <property type="entry name" value="MscL_channel"/>
</dbReference>
<dbReference type="NCBIfam" id="TIGR00220">
    <property type="entry name" value="mscL"/>
    <property type="match status" value="1"/>
</dbReference>
<dbReference type="NCBIfam" id="NF010559">
    <property type="entry name" value="PRK13954.1"/>
    <property type="match status" value="1"/>
</dbReference>
<dbReference type="PANTHER" id="PTHR30266:SF2">
    <property type="entry name" value="LARGE-CONDUCTANCE MECHANOSENSITIVE CHANNEL"/>
    <property type="match status" value="1"/>
</dbReference>
<dbReference type="PANTHER" id="PTHR30266">
    <property type="entry name" value="MECHANOSENSITIVE CHANNEL MSCL"/>
    <property type="match status" value="1"/>
</dbReference>
<dbReference type="Pfam" id="PF01741">
    <property type="entry name" value="MscL"/>
    <property type="match status" value="1"/>
</dbReference>
<dbReference type="PRINTS" id="PR01264">
    <property type="entry name" value="MECHCHANNEL"/>
</dbReference>
<dbReference type="SUPFAM" id="SSF81330">
    <property type="entry name" value="Gated mechanosensitive channel"/>
    <property type="match status" value="1"/>
</dbReference>
<dbReference type="PROSITE" id="PS01327">
    <property type="entry name" value="MSCL"/>
    <property type="match status" value="1"/>
</dbReference>
<accession>Q4L656</accession>
<reference key="1">
    <citation type="journal article" date="2005" name="J. Bacteriol.">
        <title>Whole-genome sequencing of Staphylococcus haemolyticus uncovers the extreme plasticity of its genome and the evolution of human-colonizing staphylococcal species.</title>
        <authorList>
            <person name="Takeuchi F."/>
            <person name="Watanabe S."/>
            <person name="Baba T."/>
            <person name="Yuzawa H."/>
            <person name="Ito T."/>
            <person name="Morimoto Y."/>
            <person name="Kuroda M."/>
            <person name="Cui L."/>
            <person name="Takahashi M."/>
            <person name="Ankai A."/>
            <person name="Baba S."/>
            <person name="Fukui S."/>
            <person name="Lee J.C."/>
            <person name="Hiramatsu K."/>
        </authorList>
    </citation>
    <scope>NUCLEOTIDE SEQUENCE [LARGE SCALE GENOMIC DNA]</scope>
    <source>
        <strain>JCSC1435</strain>
    </source>
</reference>
<feature type="chain" id="PRO_0000238040" description="Large-conductance mechanosensitive channel">
    <location>
        <begin position="1"/>
        <end position="117"/>
    </location>
</feature>
<feature type="transmembrane region" description="Helical" evidence="1">
    <location>
        <begin position="7"/>
        <end position="27"/>
    </location>
</feature>
<feature type="transmembrane region" description="Helical" evidence="1">
    <location>
        <begin position="30"/>
        <end position="50"/>
    </location>
</feature>
<feature type="transmembrane region" description="Helical" evidence="1">
    <location>
        <begin position="64"/>
        <end position="84"/>
    </location>
</feature>
<name>MSCL_STAHJ</name>